<protein>
    <recommendedName>
        <fullName>Probable potassium transporter 2</fullName>
    </recommendedName>
    <alternativeName>
        <fullName>OsHAK2</fullName>
    </alternativeName>
</protein>
<sequence length="783" mass="88151">MDAEAGVGGADQLPWRQHYRNLLLLAYQSFGVVYGDLSTSPLYVYKSTFSGRLRRYQDEQTVFGVLSLIFWTFTLIPLLKYVTIVLSADDNGEGGPFALYSLLCRHAKLSFLPNQQSADEELSTYYRNGFTSRHGSLPWLRRFMEKHKNARTVLLLIVLCGASMMIGDGILTPAISVLSSMSGLKVRATGLHDRSVVLLSCIVLVGLFALQHRGTQKVAFMFAPIVVIWLFCIGGIGLYNIIHWNPRIYQALSPYYIVKFFRTTGKDGWIALGGILLSMTGCEAMFADLGHFTSASVRLAFITIIYPCLILQYMGQAAFLSKNILDMPTGFYDSIPGPIFWPVFVVATLAAVVGSQAVISATFSIVKQCHSLGCFPRVKVVHTSRWIYGQIYIPEINWILMVLCVAVTVAFRDITLIGNAYGVACMTVMFVTTFLMALIMIFVWQKNIIFALSFFLLFGSVEVVYLSSSLMKVTQGGWVPLVLALIFMSVMYIWHYGTRKKYQYDLQNKVSMRYILSLGPSLDVVRVPGIGLIYTELVTGVPNIFTHFTTNLPAFHEVLVFLCVKSVPVPYVSPDERYLVGRIGPRAYRMYRCIVRYGYKDVQRDDDNFENMLVMNIGKFIMMEAEDASSSASYDTANEGRMAVITTSDDYDSPLAVRDSNDLADSMTMRSTKSESLRSLQSSYEQESPNVSRRRRVRFELPEEDDMDQQVKDELLALVEAKHTGVTYVMGHVYIKARKNSSFFKRFAIDVGYSFLRKNCRGPSVTLHIPHISLIEVGMAYQV</sequence>
<feature type="chain" id="PRO_0000209091" description="Probable potassium transporter 2">
    <location>
        <begin position="1"/>
        <end position="783"/>
    </location>
</feature>
<feature type="topological domain" description="Cytoplasmic" evidence="1">
    <location>
        <begin position="1"/>
        <end position="21"/>
    </location>
</feature>
<feature type="transmembrane region" description="Helical; Name=1" evidence="1">
    <location>
        <begin position="22"/>
        <end position="42"/>
    </location>
</feature>
<feature type="topological domain" description="Extracellular" evidence="1">
    <location>
        <begin position="43"/>
        <end position="61"/>
    </location>
</feature>
<feature type="transmembrane region" description="Helical; Name=2" evidence="1">
    <location>
        <begin position="62"/>
        <end position="82"/>
    </location>
</feature>
<feature type="topological domain" description="Cytoplasmic" evidence="1">
    <location>
        <begin position="83"/>
        <end position="152"/>
    </location>
</feature>
<feature type="transmembrane region" description="Helical; Name=3" evidence="1">
    <location>
        <begin position="153"/>
        <end position="173"/>
    </location>
</feature>
<feature type="topological domain" description="Extracellular" evidence="1">
    <location>
        <begin position="174"/>
        <end position="189"/>
    </location>
</feature>
<feature type="transmembrane region" description="Helical; Name=4" evidence="1">
    <location>
        <begin position="190"/>
        <end position="210"/>
    </location>
</feature>
<feature type="topological domain" description="Cytoplasmic" evidence="1">
    <location>
        <begin position="211"/>
        <end position="217"/>
    </location>
</feature>
<feature type="transmembrane region" description="Helical; Name=5" evidence="1">
    <location>
        <begin position="218"/>
        <end position="238"/>
    </location>
</feature>
<feature type="topological domain" description="Extracellular" evidence="1">
    <location>
        <begin position="239"/>
        <end position="268"/>
    </location>
</feature>
<feature type="transmembrane region" description="Helical; Name=6" evidence="1">
    <location>
        <begin position="269"/>
        <end position="289"/>
    </location>
</feature>
<feature type="topological domain" description="Cytoplasmic" evidence="1">
    <location>
        <begin position="290"/>
        <end position="298"/>
    </location>
</feature>
<feature type="transmembrane region" description="Helical; Name=7" evidence="1">
    <location>
        <begin position="299"/>
        <end position="319"/>
    </location>
</feature>
<feature type="topological domain" description="Extracellular" evidence="1">
    <location>
        <begin position="320"/>
        <end position="338"/>
    </location>
</feature>
<feature type="transmembrane region" description="Helical; Name=8" evidence="1">
    <location>
        <begin position="339"/>
        <end position="359"/>
    </location>
</feature>
<feature type="topological domain" description="Cytoplasmic" evidence="1">
    <location>
        <begin position="360"/>
        <end position="390"/>
    </location>
</feature>
<feature type="transmembrane region" description="Helical; Name=9" evidence="1">
    <location>
        <begin position="391"/>
        <end position="411"/>
    </location>
</feature>
<feature type="topological domain" description="Extracellular" evidence="1">
    <location>
        <begin position="412"/>
        <end position="422"/>
    </location>
</feature>
<feature type="transmembrane region" description="Helical; Name=10" evidence="1">
    <location>
        <begin position="423"/>
        <end position="443"/>
    </location>
</feature>
<feature type="topological domain" description="Cytoplasmic" evidence="1">
    <location>
        <begin position="444"/>
        <end position="447"/>
    </location>
</feature>
<feature type="transmembrane region" description="Helical; Name=11" evidence="1">
    <location>
        <begin position="448"/>
        <end position="468"/>
    </location>
</feature>
<feature type="topological domain" description="Extracellular" evidence="1">
    <location>
        <begin position="469"/>
        <end position="475"/>
    </location>
</feature>
<feature type="transmembrane region" description="Helical; Name=12" evidence="1">
    <location>
        <begin position="476"/>
        <end position="496"/>
    </location>
</feature>
<feature type="topological domain" description="Cytoplasmic" evidence="1">
    <location>
        <begin position="497"/>
        <end position="783"/>
    </location>
</feature>
<feature type="region of interest" description="Disordered" evidence="2">
    <location>
        <begin position="662"/>
        <end position="691"/>
    </location>
</feature>
<feature type="compositionally biased region" description="Polar residues" evidence="2">
    <location>
        <begin position="677"/>
        <end position="691"/>
    </location>
</feature>
<feature type="splice variant" id="VSP_037670" description="In isoform 2." evidence="4">
    <location>
        <begin position="1"/>
        <end position="143"/>
    </location>
</feature>
<feature type="sequence conflict" description="In Ref. 6; AK070575." evidence="5" ref="6">
    <original>N</original>
    <variation>D</variation>
    <location>
        <position position="323"/>
    </location>
</feature>
<gene>
    <name type="primary">HAK2</name>
    <name type="ordered locus">Os01g0935500</name>
    <name type="ordered locus">LOC_Os01g70940</name>
    <name type="ORF">OsJ_04680</name>
    <name type="ORF">P0492G09.24-1</name>
    <name type="ORF">P0492G09.24-2</name>
</gene>
<evidence type="ECO:0000255" key="1"/>
<evidence type="ECO:0000256" key="2">
    <source>
        <dbReference type="SAM" id="MobiDB-lite"/>
    </source>
</evidence>
<evidence type="ECO:0000269" key="3">
    <source>
    </source>
</evidence>
<evidence type="ECO:0000303" key="4">
    <source>
    </source>
</evidence>
<evidence type="ECO:0000305" key="5"/>
<evidence type="ECO:0000305" key="6">
    <source>
    </source>
</evidence>
<proteinExistence type="evidence at transcript level"/>
<dbReference type="EMBL" id="AP003266">
    <property type="protein sequence ID" value="BAB64197.1"/>
    <property type="molecule type" value="Genomic_DNA"/>
</dbReference>
<dbReference type="EMBL" id="AP003266">
    <property type="protein sequence ID" value="BAD87252.1"/>
    <property type="molecule type" value="Genomic_DNA"/>
</dbReference>
<dbReference type="EMBL" id="AP008207">
    <property type="protein sequence ID" value="BAF07234.1"/>
    <property type="molecule type" value="Genomic_DNA"/>
</dbReference>
<dbReference type="EMBL" id="AP014957">
    <property type="protein sequence ID" value="BAS76089.1"/>
    <property type="molecule type" value="Genomic_DNA"/>
</dbReference>
<dbReference type="EMBL" id="CM000138">
    <property type="protein sequence ID" value="EEE55959.1"/>
    <property type="molecule type" value="Genomic_DNA"/>
</dbReference>
<dbReference type="EMBL" id="AK070575">
    <property type="status" value="NOT_ANNOTATED_CDS"/>
    <property type="molecule type" value="mRNA"/>
</dbReference>
<dbReference type="EMBL" id="AK071411">
    <property type="protein sequence ID" value="BAG92483.1"/>
    <property type="molecule type" value="mRNA"/>
</dbReference>
<dbReference type="RefSeq" id="XP_015617444.1">
    <property type="nucleotide sequence ID" value="XM_015761958.1"/>
</dbReference>
<dbReference type="FunCoup" id="Q942X8">
    <property type="interactions" value="104"/>
</dbReference>
<dbReference type="STRING" id="39947.Q942X8"/>
<dbReference type="PaxDb" id="39947-Q942X8"/>
<dbReference type="EnsemblPlants" id="Os01t0935500-01">
    <molecule id="Q942X8-1"/>
    <property type="protein sequence ID" value="Os01t0935500-01"/>
    <property type="gene ID" value="Os01g0935500"/>
</dbReference>
<dbReference type="Gramene" id="Os01t0935500-01">
    <molecule id="Q942X8-1"/>
    <property type="protein sequence ID" value="Os01t0935500-01"/>
    <property type="gene ID" value="Os01g0935500"/>
</dbReference>
<dbReference type="KEGG" id="dosa:Os01g0935500"/>
<dbReference type="eggNOG" id="ENOG502QPSA">
    <property type="taxonomic scope" value="Eukaryota"/>
</dbReference>
<dbReference type="HOGENOM" id="CLU_008142_2_0_1"/>
<dbReference type="InParanoid" id="Q942X8"/>
<dbReference type="OMA" id="DQLPWRQ"/>
<dbReference type="OrthoDB" id="504708at2759"/>
<dbReference type="Proteomes" id="UP000000763">
    <property type="component" value="Chromosome 1"/>
</dbReference>
<dbReference type="Proteomes" id="UP000007752">
    <property type="component" value="Chromosome 1"/>
</dbReference>
<dbReference type="Proteomes" id="UP000059680">
    <property type="component" value="Chromosome 1"/>
</dbReference>
<dbReference type="ExpressionAtlas" id="Q942X8">
    <property type="expression patterns" value="baseline and differential"/>
</dbReference>
<dbReference type="GO" id="GO:0016020">
    <property type="term" value="C:membrane"/>
    <property type="evidence" value="ECO:0000318"/>
    <property type="project" value="GO_Central"/>
</dbReference>
<dbReference type="GO" id="GO:0005886">
    <property type="term" value="C:plasma membrane"/>
    <property type="evidence" value="ECO:0000304"/>
    <property type="project" value="UniProtKB"/>
</dbReference>
<dbReference type="GO" id="GO:0015079">
    <property type="term" value="F:potassium ion transmembrane transporter activity"/>
    <property type="evidence" value="ECO:0000314"/>
    <property type="project" value="UniProtKB"/>
</dbReference>
<dbReference type="GO" id="GO:0015081">
    <property type="term" value="F:sodium ion transmembrane transporter activity"/>
    <property type="evidence" value="ECO:0000314"/>
    <property type="project" value="UniProtKB"/>
</dbReference>
<dbReference type="GO" id="GO:0006813">
    <property type="term" value="P:potassium ion transport"/>
    <property type="evidence" value="ECO:0000318"/>
    <property type="project" value="GO_Central"/>
</dbReference>
<dbReference type="InterPro" id="IPR003855">
    <property type="entry name" value="K+_transporter"/>
</dbReference>
<dbReference type="InterPro" id="IPR053952">
    <property type="entry name" value="K_trans_C"/>
</dbReference>
<dbReference type="InterPro" id="IPR053951">
    <property type="entry name" value="K_trans_N"/>
</dbReference>
<dbReference type="NCBIfam" id="TIGR00794">
    <property type="entry name" value="kup"/>
    <property type="match status" value="1"/>
</dbReference>
<dbReference type="PANTHER" id="PTHR30540:SF83">
    <property type="entry name" value="K+ POTASSIUM TRANSPORTER"/>
    <property type="match status" value="1"/>
</dbReference>
<dbReference type="PANTHER" id="PTHR30540">
    <property type="entry name" value="OSMOTIC STRESS POTASSIUM TRANSPORTER"/>
    <property type="match status" value="1"/>
</dbReference>
<dbReference type="Pfam" id="PF02705">
    <property type="entry name" value="K_trans"/>
    <property type="match status" value="1"/>
</dbReference>
<dbReference type="Pfam" id="PF22776">
    <property type="entry name" value="K_trans_C"/>
    <property type="match status" value="1"/>
</dbReference>
<keyword id="KW-0025">Alternative splicing</keyword>
<keyword id="KW-1003">Cell membrane</keyword>
<keyword id="KW-0406">Ion transport</keyword>
<keyword id="KW-0472">Membrane</keyword>
<keyword id="KW-0630">Potassium</keyword>
<keyword id="KW-0633">Potassium transport</keyword>
<keyword id="KW-1185">Reference proteome</keyword>
<keyword id="KW-0915">Sodium</keyword>
<keyword id="KW-0739">Sodium transport</keyword>
<keyword id="KW-0812">Transmembrane</keyword>
<keyword id="KW-1133">Transmembrane helix</keyword>
<keyword id="KW-0813">Transport</keyword>
<accession>Q942X8</accession>
<accession>A0A0N7KED2</accession>
<accession>Q0JG94</accession>
<accession>Q5JMQ4</accession>
<comment type="function">
    <text evidence="3">High-affinity potassium transporter (PubMed:21084222). Can transport sodium under high sodium and low potassium concentrations in the extracellular environment (PubMed:21084222).</text>
</comment>
<comment type="catalytic activity">
    <reaction evidence="3">
        <text>K(+)(in) = K(+)(out)</text>
        <dbReference type="Rhea" id="RHEA:29463"/>
        <dbReference type="ChEBI" id="CHEBI:29103"/>
    </reaction>
</comment>
<comment type="catalytic activity">
    <reaction evidence="3">
        <text>Na(+)(in) = Na(+)(out)</text>
        <dbReference type="Rhea" id="RHEA:34963"/>
        <dbReference type="ChEBI" id="CHEBI:29101"/>
    </reaction>
</comment>
<comment type="subcellular location">
    <subcellularLocation>
        <location evidence="6">Cell membrane</location>
        <topology evidence="1">Multi-pass membrane protein</topology>
    </subcellularLocation>
</comment>
<comment type="alternative products">
    <event type="alternative splicing"/>
    <isoform>
        <id>Q942X8-1</id>
        <name>1</name>
        <sequence type="displayed"/>
    </isoform>
    <isoform>
        <id>Q942X8-2</id>
        <name>2</name>
        <sequence type="described" ref="VSP_037670"/>
    </isoform>
</comment>
<comment type="similarity">
    <text evidence="5">Belongs to the HAK/KUP transporter (TC 2.A.72.3) family.</text>
</comment>
<reference key="1">
    <citation type="journal article" date="2002" name="Nature">
        <title>The genome sequence and structure of rice chromosome 1.</title>
        <authorList>
            <person name="Sasaki T."/>
            <person name="Matsumoto T."/>
            <person name="Yamamoto K."/>
            <person name="Sakata K."/>
            <person name="Baba T."/>
            <person name="Katayose Y."/>
            <person name="Wu J."/>
            <person name="Niimura Y."/>
            <person name="Cheng Z."/>
            <person name="Nagamura Y."/>
            <person name="Antonio B.A."/>
            <person name="Kanamori H."/>
            <person name="Hosokawa S."/>
            <person name="Masukawa M."/>
            <person name="Arikawa K."/>
            <person name="Chiden Y."/>
            <person name="Hayashi M."/>
            <person name="Okamoto M."/>
            <person name="Ando T."/>
            <person name="Aoki H."/>
            <person name="Arita K."/>
            <person name="Hamada M."/>
            <person name="Harada C."/>
            <person name="Hijishita S."/>
            <person name="Honda M."/>
            <person name="Ichikawa Y."/>
            <person name="Idonuma A."/>
            <person name="Iijima M."/>
            <person name="Ikeda M."/>
            <person name="Ikeno M."/>
            <person name="Ito S."/>
            <person name="Ito T."/>
            <person name="Ito Y."/>
            <person name="Ito Y."/>
            <person name="Iwabuchi A."/>
            <person name="Kamiya K."/>
            <person name="Karasawa W."/>
            <person name="Katagiri S."/>
            <person name="Kikuta A."/>
            <person name="Kobayashi N."/>
            <person name="Kono I."/>
            <person name="Machita K."/>
            <person name="Maehara T."/>
            <person name="Mizuno H."/>
            <person name="Mizubayashi T."/>
            <person name="Mukai Y."/>
            <person name="Nagasaki H."/>
            <person name="Nakashima M."/>
            <person name="Nakama Y."/>
            <person name="Nakamichi Y."/>
            <person name="Nakamura M."/>
            <person name="Namiki N."/>
            <person name="Negishi M."/>
            <person name="Ohta I."/>
            <person name="Ono N."/>
            <person name="Saji S."/>
            <person name="Sakai K."/>
            <person name="Shibata M."/>
            <person name="Shimokawa T."/>
            <person name="Shomura A."/>
            <person name="Song J."/>
            <person name="Takazaki Y."/>
            <person name="Terasawa K."/>
            <person name="Tsuji K."/>
            <person name="Waki K."/>
            <person name="Yamagata H."/>
            <person name="Yamane H."/>
            <person name="Yoshiki S."/>
            <person name="Yoshihara R."/>
            <person name="Yukawa K."/>
            <person name="Zhong H."/>
            <person name="Iwama H."/>
            <person name="Endo T."/>
            <person name="Ito H."/>
            <person name="Hahn J.H."/>
            <person name="Kim H.-I."/>
            <person name="Eun M.-Y."/>
            <person name="Yano M."/>
            <person name="Jiang J."/>
            <person name="Gojobori T."/>
        </authorList>
    </citation>
    <scope>NUCLEOTIDE SEQUENCE [LARGE SCALE GENOMIC DNA]</scope>
    <source>
        <strain>cv. Nipponbare</strain>
    </source>
</reference>
<reference key="2">
    <citation type="journal article" date="2005" name="Nature">
        <title>The map-based sequence of the rice genome.</title>
        <authorList>
            <consortium name="International rice genome sequencing project (IRGSP)"/>
        </authorList>
    </citation>
    <scope>NUCLEOTIDE SEQUENCE [LARGE SCALE GENOMIC DNA]</scope>
    <source>
        <strain>cv. Nipponbare</strain>
    </source>
</reference>
<reference key="3">
    <citation type="journal article" date="2008" name="Nucleic Acids Res.">
        <title>The rice annotation project database (RAP-DB): 2008 update.</title>
        <authorList>
            <consortium name="The rice annotation project (RAP)"/>
        </authorList>
    </citation>
    <scope>GENOME REANNOTATION</scope>
    <source>
        <strain>cv. Nipponbare</strain>
    </source>
</reference>
<reference key="4">
    <citation type="journal article" date="2013" name="Rice">
        <title>Improvement of the Oryza sativa Nipponbare reference genome using next generation sequence and optical map data.</title>
        <authorList>
            <person name="Kawahara Y."/>
            <person name="de la Bastide M."/>
            <person name="Hamilton J.P."/>
            <person name="Kanamori H."/>
            <person name="McCombie W.R."/>
            <person name="Ouyang S."/>
            <person name="Schwartz D.C."/>
            <person name="Tanaka T."/>
            <person name="Wu J."/>
            <person name="Zhou S."/>
            <person name="Childs K.L."/>
            <person name="Davidson R.M."/>
            <person name="Lin H."/>
            <person name="Quesada-Ocampo L."/>
            <person name="Vaillancourt B."/>
            <person name="Sakai H."/>
            <person name="Lee S.S."/>
            <person name="Kim J."/>
            <person name="Numa H."/>
            <person name="Itoh T."/>
            <person name="Buell C.R."/>
            <person name="Matsumoto T."/>
        </authorList>
    </citation>
    <scope>GENOME REANNOTATION</scope>
    <source>
        <strain>cv. Nipponbare</strain>
    </source>
</reference>
<reference key="5">
    <citation type="journal article" date="2005" name="PLoS Biol.">
        <title>The genomes of Oryza sativa: a history of duplications.</title>
        <authorList>
            <person name="Yu J."/>
            <person name="Wang J."/>
            <person name="Lin W."/>
            <person name="Li S."/>
            <person name="Li H."/>
            <person name="Zhou J."/>
            <person name="Ni P."/>
            <person name="Dong W."/>
            <person name="Hu S."/>
            <person name="Zeng C."/>
            <person name="Zhang J."/>
            <person name="Zhang Y."/>
            <person name="Li R."/>
            <person name="Xu Z."/>
            <person name="Li S."/>
            <person name="Li X."/>
            <person name="Zheng H."/>
            <person name="Cong L."/>
            <person name="Lin L."/>
            <person name="Yin J."/>
            <person name="Geng J."/>
            <person name="Li G."/>
            <person name="Shi J."/>
            <person name="Liu J."/>
            <person name="Lv H."/>
            <person name="Li J."/>
            <person name="Wang J."/>
            <person name="Deng Y."/>
            <person name="Ran L."/>
            <person name="Shi X."/>
            <person name="Wang X."/>
            <person name="Wu Q."/>
            <person name="Li C."/>
            <person name="Ren X."/>
            <person name="Wang J."/>
            <person name="Wang X."/>
            <person name="Li D."/>
            <person name="Liu D."/>
            <person name="Zhang X."/>
            <person name="Ji Z."/>
            <person name="Zhao W."/>
            <person name="Sun Y."/>
            <person name="Zhang Z."/>
            <person name="Bao J."/>
            <person name="Han Y."/>
            <person name="Dong L."/>
            <person name="Ji J."/>
            <person name="Chen P."/>
            <person name="Wu S."/>
            <person name="Liu J."/>
            <person name="Xiao Y."/>
            <person name="Bu D."/>
            <person name="Tan J."/>
            <person name="Yang L."/>
            <person name="Ye C."/>
            <person name="Zhang J."/>
            <person name="Xu J."/>
            <person name="Zhou Y."/>
            <person name="Yu Y."/>
            <person name="Zhang B."/>
            <person name="Zhuang S."/>
            <person name="Wei H."/>
            <person name="Liu B."/>
            <person name="Lei M."/>
            <person name="Yu H."/>
            <person name="Li Y."/>
            <person name="Xu H."/>
            <person name="Wei S."/>
            <person name="He X."/>
            <person name="Fang L."/>
            <person name="Zhang Z."/>
            <person name="Zhang Y."/>
            <person name="Huang X."/>
            <person name="Su Z."/>
            <person name="Tong W."/>
            <person name="Li J."/>
            <person name="Tong Z."/>
            <person name="Li S."/>
            <person name="Ye J."/>
            <person name="Wang L."/>
            <person name="Fang L."/>
            <person name="Lei T."/>
            <person name="Chen C.-S."/>
            <person name="Chen H.-C."/>
            <person name="Xu Z."/>
            <person name="Li H."/>
            <person name="Huang H."/>
            <person name="Zhang F."/>
            <person name="Xu H."/>
            <person name="Li N."/>
            <person name="Zhao C."/>
            <person name="Li S."/>
            <person name="Dong L."/>
            <person name="Huang Y."/>
            <person name="Li L."/>
            <person name="Xi Y."/>
            <person name="Qi Q."/>
            <person name="Li W."/>
            <person name="Zhang B."/>
            <person name="Hu W."/>
            <person name="Zhang Y."/>
            <person name="Tian X."/>
            <person name="Jiao Y."/>
            <person name="Liang X."/>
            <person name="Jin J."/>
            <person name="Gao L."/>
            <person name="Zheng W."/>
            <person name="Hao B."/>
            <person name="Liu S.-M."/>
            <person name="Wang W."/>
            <person name="Yuan L."/>
            <person name="Cao M."/>
            <person name="McDermott J."/>
            <person name="Samudrala R."/>
            <person name="Wang J."/>
            <person name="Wong G.K.-S."/>
            <person name="Yang H."/>
        </authorList>
    </citation>
    <scope>NUCLEOTIDE SEQUENCE [LARGE SCALE GENOMIC DNA]</scope>
    <source>
        <strain>cv. Nipponbare</strain>
    </source>
</reference>
<reference key="6">
    <citation type="journal article" date="2003" name="Science">
        <title>Collection, mapping, and annotation of over 28,000 cDNA clones from japonica rice.</title>
        <authorList>
            <consortium name="The rice full-length cDNA consortium"/>
        </authorList>
    </citation>
    <scope>NUCLEOTIDE SEQUENCE [LARGE SCALE MRNA] (ISOFORMS 1 AND 2)</scope>
    <source>
        <strain>cv. Nipponbare</strain>
    </source>
</reference>
<reference key="7">
    <citation type="journal article" date="2002" name="Plant Physiol.">
        <title>Inventory and functional characterization of the HAK potassium transporters of rice.</title>
        <authorList>
            <person name="Banuelos M.A."/>
            <person name="Garciadeblas B."/>
            <person name="Cubero B."/>
            <person name="Rodriguez-Navarro A."/>
        </authorList>
    </citation>
    <scope>NOMENCLATURE</scope>
</reference>
<reference key="8">
    <citation type="journal article" date="2009" name="J. Genet. Genomics">
        <title>Molecular evolution and functional divergence of HAK potassium transporter gene family in rice (Oryza sativa L.).</title>
        <authorList>
            <person name="Yang Z."/>
            <person name="Gao Q."/>
            <person name="Sun C."/>
            <person name="Li W."/>
            <person name="Gu S."/>
            <person name="Xu C."/>
        </authorList>
    </citation>
    <scope>GENE FAMILY</scope>
</reference>
<reference key="9">
    <citation type="journal article" date="2011" name="J. Biosci. Bioeng.">
        <title>Rice sodium-insensitive potassium transporter, OsHAK5, confers increased salt tolerance in tobacco BY2 cells.</title>
        <authorList>
            <person name="Horie T."/>
            <person name="Sugawara M."/>
            <person name="Okada T."/>
            <person name="Taira K."/>
            <person name="Kaothien-Nakayama P."/>
            <person name="Katsuhara M."/>
            <person name="Shinmyo A."/>
            <person name="Nakayama H."/>
        </authorList>
    </citation>
    <scope>FUNCTION</scope>
    <scope>TRANSPORTER ACTIVITY</scope>
    <scope>SUBCELLULAR LOCATION</scope>
</reference>
<name>HAK2_ORYSJ</name>
<organism>
    <name type="scientific">Oryza sativa subsp. japonica</name>
    <name type="common">Rice</name>
    <dbReference type="NCBI Taxonomy" id="39947"/>
    <lineage>
        <taxon>Eukaryota</taxon>
        <taxon>Viridiplantae</taxon>
        <taxon>Streptophyta</taxon>
        <taxon>Embryophyta</taxon>
        <taxon>Tracheophyta</taxon>
        <taxon>Spermatophyta</taxon>
        <taxon>Magnoliopsida</taxon>
        <taxon>Liliopsida</taxon>
        <taxon>Poales</taxon>
        <taxon>Poaceae</taxon>
        <taxon>BOP clade</taxon>
        <taxon>Oryzoideae</taxon>
        <taxon>Oryzeae</taxon>
        <taxon>Oryzinae</taxon>
        <taxon>Oryza</taxon>
        <taxon>Oryza sativa</taxon>
    </lineage>
</organism>